<sequence>MDYKNKIAQLIKQHVDLDIDAIEKLIEIPPKSEMGDYAFPCFQLSKVMRKAPNMIAETLKDAINKDGFERIENLGPYLNFFVDKGVFAENTINKILKDGDSYGESNIGEGKTVCVEYSSPNIAKPFHVGHLFTTAIGNSLYKMFKKEGYDVVGLNHLGDWGTQFGKLISAYNRWVDEEALEKAPIDELLRIYVKFHDEAEKDPSLEDEGRMYFKKLETGDAEAQALWKRFRDLSLKEFERVYDILGVKFDSLAGEAFYNDKMDVVVNELKDKGLLVESNGAQVVMLDDYNMPPCIVLKGDGASIYATRDLAAAMYRKKTYDFYKSIYVVGSPQALHFKQVFKVLELAGHEWANDCVHVGFGLVKFADRKLSTRKGEVVLLDDLIRESVEKTLEVINEKNPELENKEEVAKKIGVGAIIFTYLKNSREKDIVFDWKEILSFEGETGPYVQYSYARANSIISRAENISSEVDYSKLSSKEEFELVKVLANFNNQIKLATDKLEPSILTRYVIDVAKSFNKFYNAHSVLNLDDEVLKATRLSLVKSSLQVIKNGLELLGIDVVEKM</sequence>
<comment type="catalytic activity">
    <reaction evidence="1">
        <text>tRNA(Arg) + L-arginine + ATP = L-arginyl-tRNA(Arg) + AMP + diphosphate</text>
        <dbReference type="Rhea" id="RHEA:20301"/>
        <dbReference type="Rhea" id="RHEA-COMP:9658"/>
        <dbReference type="Rhea" id="RHEA-COMP:9673"/>
        <dbReference type="ChEBI" id="CHEBI:30616"/>
        <dbReference type="ChEBI" id="CHEBI:32682"/>
        <dbReference type="ChEBI" id="CHEBI:33019"/>
        <dbReference type="ChEBI" id="CHEBI:78442"/>
        <dbReference type="ChEBI" id="CHEBI:78513"/>
        <dbReference type="ChEBI" id="CHEBI:456215"/>
        <dbReference type="EC" id="6.1.1.19"/>
    </reaction>
</comment>
<comment type="subunit">
    <text evidence="1">Monomer.</text>
</comment>
<comment type="subcellular location">
    <subcellularLocation>
        <location evidence="1">Cytoplasm</location>
    </subcellularLocation>
</comment>
<comment type="similarity">
    <text evidence="1">Belongs to the class-I aminoacyl-tRNA synthetase family.</text>
</comment>
<dbReference type="EC" id="6.1.1.19" evidence="1"/>
<dbReference type="EMBL" id="CP001078">
    <property type="protein sequence ID" value="ACD52170.1"/>
    <property type="molecule type" value="Genomic_DNA"/>
</dbReference>
<dbReference type="RefSeq" id="WP_012450377.1">
    <property type="nucleotide sequence ID" value="NC_010723.1"/>
</dbReference>
<dbReference type="SMR" id="B2UW74"/>
<dbReference type="KEGG" id="cbt:CLH_2328"/>
<dbReference type="HOGENOM" id="CLU_006406_6_1_9"/>
<dbReference type="GO" id="GO:0005737">
    <property type="term" value="C:cytoplasm"/>
    <property type="evidence" value="ECO:0007669"/>
    <property type="project" value="UniProtKB-SubCell"/>
</dbReference>
<dbReference type="GO" id="GO:0004814">
    <property type="term" value="F:arginine-tRNA ligase activity"/>
    <property type="evidence" value="ECO:0007669"/>
    <property type="project" value="UniProtKB-UniRule"/>
</dbReference>
<dbReference type="GO" id="GO:0005524">
    <property type="term" value="F:ATP binding"/>
    <property type="evidence" value="ECO:0007669"/>
    <property type="project" value="UniProtKB-UniRule"/>
</dbReference>
<dbReference type="GO" id="GO:0006420">
    <property type="term" value="P:arginyl-tRNA aminoacylation"/>
    <property type="evidence" value="ECO:0007669"/>
    <property type="project" value="UniProtKB-UniRule"/>
</dbReference>
<dbReference type="CDD" id="cd07956">
    <property type="entry name" value="Anticodon_Ia_Arg"/>
    <property type="match status" value="1"/>
</dbReference>
<dbReference type="CDD" id="cd00671">
    <property type="entry name" value="ArgRS_core"/>
    <property type="match status" value="1"/>
</dbReference>
<dbReference type="FunFam" id="1.10.730.10:FF:000008">
    <property type="entry name" value="Arginine--tRNA ligase"/>
    <property type="match status" value="1"/>
</dbReference>
<dbReference type="FunFam" id="3.40.50.620:FF:000116">
    <property type="entry name" value="Arginine--tRNA ligase"/>
    <property type="match status" value="1"/>
</dbReference>
<dbReference type="Gene3D" id="3.30.1360.70">
    <property type="entry name" value="Arginyl tRNA synthetase N-terminal domain"/>
    <property type="match status" value="1"/>
</dbReference>
<dbReference type="Gene3D" id="3.40.50.620">
    <property type="entry name" value="HUPs"/>
    <property type="match status" value="1"/>
</dbReference>
<dbReference type="Gene3D" id="1.10.730.10">
    <property type="entry name" value="Isoleucyl-tRNA Synthetase, Domain 1"/>
    <property type="match status" value="1"/>
</dbReference>
<dbReference type="HAMAP" id="MF_00123">
    <property type="entry name" value="Arg_tRNA_synth"/>
    <property type="match status" value="1"/>
</dbReference>
<dbReference type="InterPro" id="IPR001412">
    <property type="entry name" value="aa-tRNA-synth_I_CS"/>
</dbReference>
<dbReference type="InterPro" id="IPR001278">
    <property type="entry name" value="Arg-tRNA-ligase"/>
</dbReference>
<dbReference type="InterPro" id="IPR005148">
    <property type="entry name" value="Arg-tRNA-synth_N"/>
</dbReference>
<dbReference type="InterPro" id="IPR036695">
    <property type="entry name" value="Arg-tRNA-synth_N_sf"/>
</dbReference>
<dbReference type="InterPro" id="IPR035684">
    <property type="entry name" value="ArgRS_core"/>
</dbReference>
<dbReference type="InterPro" id="IPR008909">
    <property type="entry name" value="DALR_anticod-bd"/>
</dbReference>
<dbReference type="InterPro" id="IPR014729">
    <property type="entry name" value="Rossmann-like_a/b/a_fold"/>
</dbReference>
<dbReference type="InterPro" id="IPR009080">
    <property type="entry name" value="tRNAsynth_Ia_anticodon-bd"/>
</dbReference>
<dbReference type="NCBIfam" id="TIGR00456">
    <property type="entry name" value="argS"/>
    <property type="match status" value="1"/>
</dbReference>
<dbReference type="PANTHER" id="PTHR11956:SF5">
    <property type="entry name" value="ARGININE--TRNA LIGASE, CYTOPLASMIC"/>
    <property type="match status" value="1"/>
</dbReference>
<dbReference type="PANTHER" id="PTHR11956">
    <property type="entry name" value="ARGINYL-TRNA SYNTHETASE"/>
    <property type="match status" value="1"/>
</dbReference>
<dbReference type="Pfam" id="PF03485">
    <property type="entry name" value="Arg_tRNA_synt_N"/>
    <property type="match status" value="1"/>
</dbReference>
<dbReference type="Pfam" id="PF05746">
    <property type="entry name" value="DALR_1"/>
    <property type="match status" value="1"/>
</dbReference>
<dbReference type="Pfam" id="PF00750">
    <property type="entry name" value="tRNA-synt_1d"/>
    <property type="match status" value="1"/>
</dbReference>
<dbReference type="PRINTS" id="PR01038">
    <property type="entry name" value="TRNASYNTHARG"/>
</dbReference>
<dbReference type="SMART" id="SM01016">
    <property type="entry name" value="Arg_tRNA_synt_N"/>
    <property type="match status" value="1"/>
</dbReference>
<dbReference type="SMART" id="SM00836">
    <property type="entry name" value="DALR_1"/>
    <property type="match status" value="1"/>
</dbReference>
<dbReference type="SUPFAM" id="SSF47323">
    <property type="entry name" value="Anticodon-binding domain of a subclass of class I aminoacyl-tRNA synthetases"/>
    <property type="match status" value="1"/>
</dbReference>
<dbReference type="SUPFAM" id="SSF55190">
    <property type="entry name" value="Arginyl-tRNA synthetase (ArgRS), N-terminal 'additional' domain"/>
    <property type="match status" value="1"/>
</dbReference>
<dbReference type="SUPFAM" id="SSF52374">
    <property type="entry name" value="Nucleotidylyl transferase"/>
    <property type="match status" value="1"/>
</dbReference>
<dbReference type="PROSITE" id="PS00178">
    <property type="entry name" value="AA_TRNA_LIGASE_I"/>
    <property type="match status" value="1"/>
</dbReference>
<keyword id="KW-0030">Aminoacyl-tRNA synthetase</keyword>
<keyword id="KW-0067">ATP-binding</keyword>
<keyword id="KW-0963">Cytoplasm</keyword>
<keyword id="KW-0436">Ligase</keyword>
<keyword id="KW-0547">Nucleotide-binding</keyword>
<keyword id="KW-0648">Protein biosynthesis</keyword>
<feature type="chain" id="PRO_1000095351" description="Arginine--tRNA ligase">
    <location>
        <begin position="1"/>
        <end position="563"/>
    </location>
</feature>
<feature type="short sequence motif" description="'HIGH' region">
    <location>
        <begin position="120"/>
        <end position="130"/>
    </location>
</feature>
<protein>
    <recommendedName>
        <fullName evidence="1">Arginine--tRNA ligase</fullName>
        <ecNumber evidence="1">6.1.1.19</ecNumber>
    </recommendedName>
    <alternativeName>
        <fullName evidence="1">Arginyl-tRNA synthetase</fullName>
        <shortName evidence="1">ArgRS</shortName>
    </alternativeName>
</protein>
<name>SYR_CLOBA</name>
<gene>
    <name evidence="1" type="primary">argS</name>
    <name type="ordered locus">CLH_2328</name>
</gene>
<reference key="1">
    <citation type="submission" date="2008-05" db="EMBL/GenBank/DDBJ databases">
        <title>Complete genome sequence of Clostridium botulinum E3 str. Alaska E43.</title>
        <authorList>
            <person name="Brinkac L.M."/>
            <person name="Brown J.L."/>
            <person name="Bruce D."/>
            <person name="Detter C."/>
            <person name="Munk C."/>
            <person name="Smith L.A."/>
            <person name="Smith T.J."/>
            <person name="Sutton G."/>
            <person name="Brettin T.S."/>
        </authorList>
    </citation>
    <scope>NUCLEOTIDE SEQUENCE [LARGE SCALE GENOMIC DNA]</scope>
    <source>
        <strain>Alaska E43 / Type E3</strain>
    </source>
</reference>
<evidence type="ECO:0000255" key="1">
    <source>
        <dbReference type="HAMAP-Rule" id="MF_00123"/>
    </source>
</evidence>
<proteinExistence type="inferred from homology"/>
<organism>
    <name type="scientific">Clostridium botulinum (strain Alaska E43 / Type E3)</name>
    <dbReference type="NCBI Taxonomy" id="508767"/>
    <lineage>
        <taxon>Bacteria</taxon>
        <taxon>Bacillati</taxon>
        <taxon>Bacillota</taxon>
        <taxon>Clostridia</taxon>
        <taxon>Eubacteriales</taxon>
        <taxon>Clostridiaceae</taxon>
        <taxon>Clostridium</taxon>
    </lineage>
</organism>
<accession>B2UW74</accession>